<feature type="chain" id="PRO_1000132429" description="Glycine cleavage system H protein">
    <location>
        <begin position="1"/>
        <end position="120"/>
    </location>
</feature>
<feature type="domain" description="Lipoyl-binding" evidence="2">
    <location>
        <begin position="17"/>
        <end position="99"/>
    </location>
</feature>
<feature type="modified residue" description="N6-lipoyllysine" evidence="1">
    <location>
        <position position="58"/>
    </location>
</feature>
<dbReference type="EMBL" id="CP001389">
    <property type="protein sequence ID" value="ACP25316.1"/>
    <property type="molecule type" value="Genomic_DNA"/>
</dbReference>
<dbReference type="RefSeq" id="WP_012708088.1">
    <property type="nucleotide sequence ID" value="NC_012587.1"/>
</dbReference>
<dbReference type="RefSeq" id="YP_002826069.1">
    <property type="nucleotide sequence ID" value="NC_012587.1"/>
</dbReference>
<dbReference type="SMR" id="C3MCZ7"/>
<dbReference type="STRING" id="394.NGR_c15480"/>
<dbReference type="KEGG" id="rhi:NGR_c15480"/>
<dbReference type="PATRIC" id="fig|394.7.peg.4359"/>
<dbReference type="eggNOG" id="COG0509">
    <property type="taxonomic scope" value="Bacteria"/>
</dbReference>
<dbReference type="HOGENOM" id="CLU_097408_2_0_5"/>
<dbReference type="OrthoDB" id="9796712at2"/>
<dbReference type="Proteomes" id="UP000001054">
    <property type="component" value="Chromosome"/>
</dbReference>
<dbReference type="GO" id="GO:0005737">
    <property type="term" value="C:cytoplasm"/>
    <property type="evidence" value="ECO:0007669"/>
    <property type="project" value="TreeGrafter"/>
</dbReference>
<dbReference type="GO" id="GO:0005960">
    <property type="term" value="C:glycine cleavage complex"/>
    <property type="evidence" value="ECO:0007669"/>
    <property type="project" value="InterPro"/>
</dbReference>
<dbReference type="GO" id="GO:0019464">
    <property type="term" value="P:glycine decarboxylation via glycine cleavage system"/>
    <property type="evidence" value="ECO:0007669"/>
    <property type="project" value="UniProtKB-UniRule"/>
</dbReference>
<dbReference type="CDD" id="cd06848">
    <property type="entry name" value="GCS_H"/>
    <property type="match status" value="1"/>
</dbReference>
<dbReference type="Gene3D" id="2.40.50.100">
    <property type="match status" value="1"/>
</dbReference>
<dbReference type="HAMAP" id="MF_00272">
    <property type="entry name" value="GcvH"/>
    <property type="match status" value="1"/>
</dbReference>
<dbReference type="InterPro" id="IPR003016">
    <property type="entry name" value="2-oxoA_DH_lipoyl-BS"/>
</dbReference>
<dbReference type="InterPro" id="IPR000089">
    <property type="entry name" value="Biotin_lipoyl"/>
</dbReference>
<dbReference type="InterPro" id="IPR002930">
    <property type="entry name" value="GCV_H"/>
</dbReference>
<dbReference type="InterPro" id="IPR033753">
    <property type="entry name" value="GCV_H/Fam206"/>
</dbReference>
<dbReference type="InterPro" id="IPR017453">
    <property type="entry name" value="GCV_H_sub"/>
</dbReference>
<dbReference type="InterPro" id="IPR011053">
    <property type="entry name" value="Single_hybrid_motif"/>
</dbReference>
<dbReference type="NCBIfam" id="TIGR00527">
    <property type="entry name" value="gcvH"/>
    <property type="match status" value="1"/>
</dbReference>
<dbReference type="NCBIfam" id="NF002270">
    <property type="entry name" value="PRK01202.1"/>
    <property type="match status" value="1"/>
</dbReference>
<dbReference type="PANTHER" id="PTHR11715">
    <property type="entry name" value="GLYCINE CLEAVAGE SYSTEM H PROTEIN"/>
    <property type="match status" value="1"/>
</dbReference>
<dbReference type="PANTHER" id="PTHR11715:SF3">
    <property type="entry name" value="GLYCINE CLEAVAGE SYSTEM H PROTEIN-RELATED"/>
    <property type="match status" value="1"/>
</dbReference>
<dbReference type="Pfam" id="PF01597">
    <property type="entry name" value="GCV_H"/>
    <property type="match status" value="1"/>
</dbReference>
<dbReference type="SUPFAM" id="SSF51230">
    <property type="entry name" value="Single hybrid motif"/>
    <property type="match status" value="1"/>
</dbReference>
<dbReference type="PROSITE" id="PS50968">
    <property type="entry name" value="BIOTINYL_LIPOYL"/>
    <property type="match status" value="1"/>
</dbReference>
<dbReference type="PROSITE" id="PS00189">
    <property type="entry name" value="LIPOYL"/>
    <property type="match status" value="1"/>
</dbReference>
<proteinExistence type="inferred from homology"/>
<keyword id="KW-0450">Lipoyl</keyword>
<keyword id="KW-1185">Reference proteome</keyword>
<organism>
    <name type="scientific">Sinorhizobium fredii (strain NBRC 101917 / NGR234)</name>
    <dbReference type="NCBI Taxonomy" id="394"/>
    <lineage>
        <taxon>Bacteria</taxon>
        <taxon>Pseudomonadati</taxon>
        <taxon>Pseudomonadota</taxon>
        <taxon>Alphaproteobacteria</taxon>
        <taxon>Hyphomicrobiales</taxon>
        <taxon>Rhizobiaceae</taxon>
        <taxon>Sinorhizobium/Ensifer group</taxon>
        <taxon>Sinorhizobium</taxon>
    </lineage>
</organism>
<evidence type="ECO:0000255" key="1">
    <source>
        <dbReference type="HAMAP-Rule" id="MF_00272"/>
    </source>
</evidence>
<evidence type="ECO:0000255" key="2">
    <source>
        <dbReference type="PROSITE-ProRule" id="PRU01066"/>
    </source>
</evidence>
<sequence>MLKFTEEHEWLKVEGGVATVGITEHAAGQLGDLVFVELPEAGATFSKGDSAATVESVKAASDVYCPLDGEIVEINQAIVDDPSLVNSDPQGAAWFFKLKLADPRSADNLLDEAAYKELVG</sequence>
<name>GCSH_SINFN</name>
<gene>
    <name evidence="1" type="primary">gcvH</name>
    <name type="ordered locus">NGR_c15480</name>
</gene>
<reference key="1">
    <citation type="journal article" date="2009" name="Appl. Environ. Microbiol.">
        <title>Rhizobium sp. strain NGR234 possesses a remarkable number of secretion systems.</title>
        <authorList>
            <person name="Schmeisser C."/>
            <person name="Liesegang H."/>
            <person name="Krysciak D."/>
            <person name="Bakkou N."/>
            <person name="Le Quere A."/>
            <person name="Wollherr A."/>
            <person name="Heinemeyer I."/>
            <person name="Morgenstern B."/>
            <person name="Pommerening-Roeser A."/>
            <person name="Flores M."/>
            <person name="Palacios R."/>
            <person name="Brenner S."/>
            <person name="Gottschalk G."/>
            <person name="Schmitz R.A."/>
            <person name="Broughton W.J."/>
            <person name="Perret X."/>
            <person name="Strittmatter A.W."/>
            <person name="Streit W.R."/>
        </authorList>
    </citation>
    <scope>NUCLEOTIDE SEQUENCE [LARGE SCALE GENOMIC DNA]</scope>
    <source>
        <strain>NBRC 101917 / NGR234</strain>
    </source>
</reference>
<protein>
    <recommendedName>
        <fullName evidence="1">Glycine cleavage system H protein</fullName>
    </recommendedName>
</protein>
<comment type="function">
    <text evidence="1">The glycine cleavage system catalyzes the degradation of glycine. The H protein shuttles the methylamine group of glycine from the P protein to the T protein.</text>
</comment>
<comment type="cofactor">
    <cofactor evidence="1">
        <name>(R)-lipoate</name>
        <dbReference type="ChEBI" id="CHEBI:83088"/>
    </cofactor>
    <text evidence="1">Binds 1 lipoyl cofactor covalently.</text>
</comment>
<comment type="subunit">
    <text evidence="1">The glycine cleavage system is composed of four proteins: P, T, L and H.</text>
</comment>
<comment type="similarity">
    <text evidence="1">Belongs to the GcvH family.</text>
</comment>
<accession>C3MCZ7</accession>